<sequence length="544" mass="59075">MAMNSKRKTPPGIALLRRVRGRNWSPKTFRYAILFITFIAYACYHASRKPSSIVKSVLHPDSSTKPPQEHNSDKIYPWPMGNVFVKREIGDIDEVLLHRKSKGWEPFNGKDGTSRLGEIDVAFLACYSIGMYVAGHLGDSLDLRLFLTWGMIGSGFFVGLFGMGYFWNIHAFWFFLVMQMAAGLFQATGWPSVVAVVGNWFGKRKRGLIMGIWNAHTSVGNICGSLIAAGVLEYGWGWSFIAPGFVMSLGGVLVYLFLAAYPEDVGFPDINSNSGKFIKRKRDVEEEEEEVEEDLGTDVEGDGEGSSGSGSGYENKRSVGLLQACMIPGVIPFALCLFFSKLVAYTFLYWLPFYLSQTTIGGEYVSVKTAGNLSTLFDVGGIVGGILCGYISDKFKARATTAAAFMYAAIPAMLVYHSYGGVSQTVNILLMMVAGLFVNGPYALITTAVSADLGTHKSLQGDSRALATVTAIIDGTGSAGAALGPLLTGFLSTLGWQAVFYMLVVGALCAGLLLTRLVIAEIREKLGYVDEEVPASEPLLTDRR</sequence>
<dbReference type="EMBL" id="Z97343">
    <property type="protein sequence ID" value="CAB10535.1"/>
    <property type="status" value="ALT_SEQ"/>
    <property type="molecule type" value="Genomic_DNA"/>
</dbReference>
<dbReference type="EMBL" id="AL161546">
    <property type="protein sequence ID" value="CAB78758.1"/>
    <property type="status" value="ALT_SEQ"/>
    <property type="molecule type" value="Genomic_DNA"/>
</dbReference>
<dbReference type="EMBL" id="CP002687">
    <property type="protein sequence ID" value="AEE83909.1"/>
    <property type="molecule type" value="Genomic_DNA"/>
</dbReference>
<dbReference type="PIR" id="B71445">
    <property type="entry name" value="B71445"/>
</dbReference>
<dbReference type="RefSeq" id="NP_193488.2">
    <property type="nucleotide sequence ID" value="NM_117861.3"/>
</dbReference>
<dbReference type="SMR" id="O23596"/>
<dbReference type="FunCoup" id="O23596">
    <property type="interactions" value="1893"/>
</dbReference>
<dbReference type="STRING" id="3702.O23596"/>
<dbReference type="PaxDb" id="3702-AT4G17550.1"/>
<dbReference type="ProteomicsDB" id="248590"/>
<dbReference type="EnsemblPlants" id="AT4G17550.1">
    <property type="protein sequence ID" value="AT4G17550.1"/>
    <property type="gene ID" value="AT4G17550"/>
</dbReference>
<dbReference type="GeneID" id="827470"/>
<dbReference type="Gramene" id="AT4G17550.1">
    <property type="protein sequence ID" value="AT4G17550.1"/>
    <property type="gene ID" value="AT4G17550"/>
</dbReference>
<dbReference type="KEGG" id="ath:AT4G17550"/>
<dbReference type="Araport" id="AT4G17550"/>
<dbReference type="TAIR" id="AT4G17550">
    <property type="gene designation" value="G3PP4"/>
</dbReference>
<dbReference type="eggNOG" id="KOG2533">
    <property type="taxonomic scope" value="Eukaryota"/>
</dbReference>
<dbReference type="HOGENOM" id="CLU_001265_31_6_1"/>
<dbReference type="InParanoid" id="O23596"/>
<dbReference type="OMA" id="WRIQIFA"/>
<dbReference type="PhylomeDB" id="O23596"/>
<dbReference type="BRENDA" id="7.6.2.10">
    <property type="organism ID" value="399"/>
</dbReference>
<dbReference type="PRO" id="PR:O23596"/>
<dbReference type="Proteomes" id="UP000006548">
    <property type="component" value="Chromosome 4"/>
</dbReference>
<dbReference type="ExpressionAtlas" id="O23596">
    <property type="expression patterns" value="baseline and differential"/>
</dbReference>
<dbReference type="GO" id="GO:0016020">
    <property type="term" value="C:membrane"/>
    <property type="evidence" value="ECO:0007669"/>
    <property type="project" value="UniProtKB-SubCell"/>
</dbReference>
<dbReference type="GO" id="GO:0000325">
    <property type="term" value="C:plant-type vacuole"/>
    <property type="evidence" value="ECO:0007005"/>
    <property type="project" value="TAIR"/>
</dbReference>
<dbReference type="GO" id="GO:0061513">
    <property type="term" value="F:glucose 6-phosphate:phosphate antiporter activity"/>
    <property type="evidence" value="ECO:0007669"/>
    <property type="project" value="InterPro"/>
</dbReference>
<dbReference type="GO" id="GO:0055062">
    <property type="term" value="P:phosphate ion homeostasis"/>
    <property type="evidence" value="ECO:0000270"/>
    <property type="project" value="TAIR"/>
</dbReference>
<dbReference type="CDD" id="cd17344">
    <property type="entry name" value="MFS_SLC37A1_2"/>
    <property type="match status" value="1"/>
</dbReference>
<dbReference type="FunFam" id="1.20.1250.20:FF:000050">
    <property type="entry name" value="glucose-6-phosphate exchanger SLC37A2 isoform X1"/>
    <property type="match status" value="1"/>
</dbReference>
<dbReference type="FunFam" id="1.20.1250.20:FF:000028">
    <property type="entry name" value="Sugar phosphate exchanger 3 isoform 1"/>
    <property type="match status" value="1"/>
</dbReference>
<dbReference type="Gene3D" id="1.20.1250.20">
    <property type="entry name" value="MFS general substrate transporter like domains"/>
    <property type="match status" value="2"/>
</dbReference>
<dbReference type="InterPro" id="IPR011701">
    <property type="entry name" value="MFS"/>
</dbReference>
<dbReference type="InterPro" id="IPR020846">
    <property type="entry name" value="MFS_dom"/>
</dbReference>
<dbReference type="InterPro" id="IPR036259">
    <property type="entry name" value="MFS_trans_sf"/>
</dbReference>
<dbReference type="InterPro" id="IPR044740">
    <property type="entry name" value="SLC37A1_2"/>
</dbReference>
<dbReference type="InterPro" id="IPR000849">
    <property type="entry name" value="Sugar_P_transporter"/>
</dbReference>
<dbReference type="PANTHER" id="PTHR43184">
    <property type="entry name" value="MAJOR FACILITATOR SUPERFAMILY TRANSPORTER 16, ISOFORM B"/>
    <property type="match status" value="1"/>
</dbReference>
<dbReference type="PANTHER" id="PTHR43184:SF12">
    <property type="entry name" value="SUGAR PHOSPHATE EXCHANGER 3"/>
    <property type="match status" value="1"/>
</dbReference>
<dbReference type="Pfam" id="PF07690">
    <property type="entry name" value="MFS_1"/>
    <property type="match status" value="1"/>
</dbReference>
<dbReference type="PIRSF" id="PIRSF002808">
    <property type="entry name" value="Hexose_phosphate_transp"/>
    <property type="match status" value="1"/>
</dbReference>
<dbReference type="SUPFAM" id="SSF103473">
    <property type="entry name" value="MFS general substrate transporter"/>
    <property type="match status" value="1"/>
</dbReference>
<dbReference type="PROSITE" id="PS50850">
    <property type="entry name" value="MFS"/>
    <property type="match status" value="1"/>
</dbReference>
<accession>O23596</accession>
<gene>
    <name type="ordered locus">At4g17550</name>
    <name type="ORF">dl4810c</name>
    <name type="ORF">FCAALL.41</name>
</gene>
<reference key="1">
    <citation type="journal article" date="1998" name="Nature">
        <title>Analysis of 1.9 Mb of contiguous sequence from chromosome 4 of Arabidopsis thaliana.</title>
        <authorList>
            <person name="Bevan M."/>
            <person name="Bancroft I."/>
            <person name="Bent E."/>
            <person name="Love K."/>
            <person name="Goodman H.M."/>
            <person name="Dean C."/>
            <person name="Bergkamp R."/>
            <person name="Dirkse W."/>
            <person name="van Staveren M."/>
            <person name="Stiekema W."/>
            <person name="Drost L."/>
            <person name="Ridley P."/>
            <person name="Hudson S.-A."/>
            <person name="Patel K."/>
            <person name="Murphy G."/>
            <person name="Piffanelli P."/>
            <person name="Wedler H."/>
            <person name="Wedler E."/>
            <person name="Wambutt R."/>
            <person name="Weitzenegger T."/>
            <person name="Pohl T."/>
            <person name="Terryn N."/>
            <person name="Gielen J."/>
            <person name="Villarroel R."/>
            <person name="De Clercq R."/>
            <person name="van Montagu M."/>
            <person name="Lecharny A."/>
            <person name="Aubourg S."/>
            <person name="Gy I."/>
            <person name="Kreis M."/>
            <person name="Lao N."/>
            <person name="Kavanagh T."/>
            <person name="Hempel S."/>
            <person name="Kotter P."/>
            <person name="Entian K.-D."/>
            <person name="Rieger M."/>
            <person name="Schaefer M."/>
            <person name="Funk B."/>
            <person name="Mueller-Auer S."/>
            <person name="Silvey M."/>
            <person name="James R."/>
            <person name="Monfort A."/>
            <person name="Pons A."/>
            <person name="Puigdomenech P."/>
            <person name="Douka A."/>
            <person name="Voukelatou E."/>
            <person name="Milioni D."/>
            <person name="Hatzopoulos P."/>
            <person name="Piravandi E."/>
            <person name="Obermaier B."/>
            <person name="Hilbert H."/>
            <person name="Duesterhoeft A."/>
            <person name="Moores T."/>
            <person name="Jones J.D.G."/>
            <person name="Eneva T."/>
            <person name="Palme K."/>
            <person name="Benes V."/>
            <person name="Rechmann S."/>
            <person name="Ansorge W."/>
            <person name="Cooke R."/>
            <person name="Berger C."/>
            <person name="Delseny M."/>
            <person name="Voet M."/>
            <person name="Volckaert G."/>
            <person name="Mewes H.-W."/>
            <person name="Klosterman S."/>
            <person name="Schueller C."/>
            <person name="Chalwatzis N."/>
        </authorList>
    </citation>
    <scope>NUCLEOTIDE SEQUENCE [LARGE SCALE GENOMIC DNA]</scope>
    <source>
        <strain>cv. Columbia</strain>
    </source>
</reference>
<reference key="2">
    <citation type="journal article" date="1999" name="Nature">
        <title>Sequence and analysis of chromosome 4 of the plant Arabidopsis thaliana.</title>
        <authorList>
            <person name="Mayer K.F.X."/>
            <person name="Schueller C."/>
            <person name="Wambutt R."/>
            <person name="Murphy G."/>
            <person name="Volckaert G."/>
            <person name="Pohl T."/>
            <person name="Duesterhoeft A."/>
            <person name="Stiekema W."/>
            <person name="Entian K.-D."/>
            <person name="Terryn N."/>
            <person name="Harris B."/>
            <person name="Ansorge W."/>
            <person name="Brandt P."/>
            <person name="Grivell L.A."/>
            <person name="Rieger M."/>
            <person name="Weichselgartner M."/>
            <person name="de Simone V."/>
            <person name="Obermaier B."/>
            <person name="Mache R."/>
            <person name="Mueller M."/>
            <person name="Kreis M."/>
            <person name="Delseny M."/>
            <person name="Puigdomenech P."/>
            <person name="Watson M."/>
            <person name="Schmidtheini T."/>
            <person name="Reichert B."/>
            <person name="Portetelle D."/>
            <person name="Perez-Alonso M."/>
            <person name="Boutry M."/>
            <person name="Bancroft I."/>
            <person name="Vos P."/>
            <person name="Hoheisel J."/>
            <person name="Zimmermann W."/>
            <person name="Wedler H."/>
            <person name="Ridley P."/>
            <person name="Langham S.-A."/>
            <person name="McCullagh B."/>
            <person name="Bilham L."/>
            <person name="Robben J."/>
            <person name="van der Schueren J."/>
            <person name="Grymonprez B."/>
            <person name="Chuang Y.-J."/>
            <person name="Vandenbussche F."/>
            <person name="Braeken M."/>
            <person name="Weltjens I."/>
            <person name="Voet M."/>
            <person name="Bastiaens I."/>
            <person name="Aert R."/>
            <person name="Defoor E."/>
            <person name="Weitzenegger T."/>
            <person name="Bothe G."/>
            <person name="Ramsperger U."/>
            <person name="Hilbert H."/>
            <person name="Braun M."/>
            <person name="Holzer E."/>
            <person name="Brandt A."/>
            <person name="Peters S."/>
            <person name="van Staveren M."/>
            <person name="Dirkse W."/>
            <person name="Mooijman P."/>
            <person name="Klein Lankhorst R."/>
            <person name="Rose M."/>
            <person name="Hauf J."/>
            <person name="Koetter P."/>
            <person name="Berneiser S."/>
            <person name="Hempel S."/>
            <person name="Feldpausch M."/>
            <person name="Lamberth S."/>
            <person name="Van den Daele H."/>
            <person name="De Keyser A."/>
            <person name="Buysshaert C."/>
            <person name="Gielen J."/>
            <person name="Villarroel R."/>
            <person name="De Clercq R."/>
            <person name="van Montagu M."/>
            <person name="Rogers J."/>
            <person name="Cronin A."/>
            <person name="Quail M.A."/>
            <person name="Bray-Allen S."/>
            <person name="Clark L."/>
            <person name="Doggett J."/>
            <person name="Hall S."/>
            <person name="Kay M."/>
            <person name="Lennard N."/>
            <person name="McLay K."/>
            <person name="Mayes R."/>
            <person name="Pettett A."/>
            <person name="Rajandream M.A."/>
            <person name="Lyne M."/>
            <person name="Benes V."/>
            <person name="Rechmann S."/>
            <person name="Borkova D."/>
            <person name="Bloecker H."/>
            <person name="Scharfe M."/>
            <person name="Grimm M."/>
            <person name="Loehnert T.-H."/>
            <person name="Dose S."/>
            <person name="de Haan M."/>
            <person name="Maarse A.C."/>
            <person name="Schaefer M."/>
            <person name="Mueller-Auer S."/>
            <person name="Gabel C."/>
            <person name="Fuchs M."/>
            <person name="Fartmann B."/>
            <person name="Granderath K."/>
            <person name="Dauner D."/>
            <person name="Herzl A."/>
            <person name="Neumann S."/>
            <person name="Argiriou A."/>
            <person name="Vitale D."/>
            <person name="Liguori R."/>
            <person name="Piravandi E."/>
            <person name="Massenet O."/>
            <person name="Quigley F."/>
            <person name="Clabauld G."/>
            <person name="Muendlein A."/>
            <person name="Felber R."/>
            <person name="Schnabl S."/>
            <person name="Hiller R."/>
            <person name="Schmidt W."/>
            <person name="Lecharny A."/>
            <person name="Aubourg S."/>
            <person name="Chefdor F."/>
            <person name="Cooke R."/>
            <person name="Berger C."/>
            <person name="Monfort A."/>
            <person name="Casacuberta E."/>
            <person name="Gibbons T."/>
            <person name="Weber N."/>
            <person name="Vandenbol M."/>
            <person name="Bargues M."/>
            <person name="Terol J."/>
            <person name="Torres A."/>
            <person name="Perez-Perez A."/>
            <person name="Purnelle B."/>
            <person name="Bent E."/>
            <person name="Johnson S."/>
            <person name="Tacon D."/>
            <person name="Jesse T."/>
            <person name="Heijnen L."/>
            <person name="Schwarz S."/>
            <person name="Scholler P."/>
            <person name="Heber S."/>
            <person name="Francs P."/>
            <person name="Bielke C."/>
            <person name="Frishman D."/>
            <person name="Haase D."/>
            <person name="Lemcke K."/>
            <person name="Mewes H.-W."/>
            <person name="Stocker S."/>
            <person name="Zaccaria P."/>
            <person name="Bevan M."/>
            <person name="Wilson R.K."/>
            <person name="de la Bastide M."/>
            <person name="Habermann K."/>
            <person name="Parnell L."/>
            <person name="Dedhia N."/>
            <person name="Gnoj L."/>
            <person name="Schutz K."/>
            <person name="Huang E."/>
            <person name="Spiegel L."/>
            <person name="Sekhon M."/>
            <person name="Murray J."/>
            <person name="Sheet P."/>
            <person name="Cordes M."/>
            <person name="Abu-Threideh J."/>
            <person name="Stoneking T."/>
            <person name="Kalicki J."/>
            <person name="Graves T."/>
            <person name="Harmon G."/>
            <person name="Edwards J."/>
            <person name="Latreille P."/>
            <person name="Courtney L."/>
            <person name="Cloud J."/>
            <person name="Abbott A."/>
            <person name="Scott K."/>
            <person name="Johnson D."/>
            <person name="Minx P."/>
            <person name="Bentley D."/>
            <person name="Fulton B."/>
            <person name="Miller N."/>
            <person name="Greco T."/>
            <person name="Kemp K."/>
            <person name="Kramer J."/>
            <person name="Fulton L."/>
            <person name="Mardis E."/>
            <person name="Dante M."/>
            <person name="Pepin K."/>
            <person name="Hillier L.W."/>
            <person name="Nelson J."/>
            <person name="Spieth J."/>
            <person name="Ryan E."/>
            <person name="Andrews S."/>
            <person name="Geisel C."/>
            <person name="Layman D."/>
            <person name="Du H."/>
            <person name="Ali J."/>
            <person name="Berghoff A."/>
            <person name="Jones K."/>
            <person name="Drone K."/>
            <person name="Cotton M."/>
            <person name="Joshu C."/>
            <person name="Antonoiu B."/>
            <person name="Zidanic M."/>
            <person name="Strong C."/>
            <person name="Sun H."/>
            <person name="Lamar B."/>
            <person name="Yordan C."/>
            <person name="Ma P."/>
            <person name="Zhong J."/>
            <person name="Preston R."/>
            <person name="Vil D."/>
            <person name="Shekher M."/>
            <person name="Matero A."/>
            <person name="Shah R."/>
            <person name="Swaby I.K."/>
            <person name="O'Shaughnessy A."/>
            <person name="Rodriguez M."/>
            <person name="Hoffman J."/>
            <person name="Till S."/>
            <person name="Granat S."/>
            <person name="Shohdy N."/>
            <person name="Hasegawa A."/>
            <person name="Hameed A."/>
            <person name="Lodhi M."/>
            <person name="Johnson A."/>
            <person name="Chen E."/>
            <person name="Marra M.A."/>
            <person name="Martienssen R."/>
            <person name="McCombie W.R."/>
        </authorList>
    </citation>
    <scope>NUCLEOTIDE SEQUENCE [LARGE SCALE GENOMIC DNA]</scope>
    <source>
        <strain>cv. Columbia</strain>
    </source>
</reference>
<reference key="3">
    <citation type="journal article" date="2017" name="Plant J.">
        <title>Araport11: a complete reannotation of the Arabidopsis thaliana reference genome.</title>
        <authorList>
            <person name="Cheng C.Y."/>
            <person name="Krishnakumar V."/>
            <person name="Chan A.P."/>
            <person name="Thibaud-Nissen F."/>
            <person name="Schobel S."/>
            <person name="Town C.D."/>
        </authorList>
    </citation>
    <scope>GENOME REANNOTATION</scope>
    <source>
        <strain>cv. Columbia</strain>
    </source>
</reference>
<name>GLPT4_ARATH</name>
<keyword id="KW-0472">Membrane</keyword>
<keyword id="KW-1185">Reference proteome</keyword>
<keyword id="KW-0762">Sugar transport</keyword>
<keyword id="KW-0812">Transmembrane</keyword>
<keyword id="KW-1133">Transmembrane helix</keyword>
<keyword id="KW-0813">Transport</keyword>
<feature type="chain" id="PRO_0000403115" description="Putative glycerol-3-phosphate transporter 4">
    <location>
        <begin position="1"/>
        <end position="544"/>
    </location>
</feature>
<feature type="transmembrane region" description="Helical" evidence="1">
    <location>
        <begin position="28"/>
        <end position="47"/>
    </location>
</feature>
<feature type="transmembrane region" description="Helical" evidence="1">
    <location>
        <begin position="121"/>
        <end position="141"/>
    </location>
</feature>
<feature type="transmembrane region" description="Helical" evidence="1">
    <location>
        <begin position="156"/>
        <end position="176"/>
    </location>
</feature>
<feature type="transmembrane region" description="Helical" evidence="1">
    <location>
        <begin position="181"/>
        <end position="201"/>
    </location>
</feature>
<feature type="transmembrane region" description="Helical" evidence="1">
    <location>
        <begin position="218"/>
        <end position="238"/>
    </location>
</feature>
<feature type="transmembrane region" description="Helical" evidence="1">
    <location>
        <begin position="240"/>
        <end position="260"/>
    </location>
</feature>
<feature type="transmembrane region" description="Helical" evidence="1">
    <location>
        <begin position="319"/>
        <end position="339"/>
    </location>
</feature>
<feature type="transmembrane region" description="Helical" evidence="1">
    <location>
        <begin position="342"/>
        <end position="362"/>
    </location>
</feature>
<feature type="transmembrane region" description="Helical" evidence="1">
    <location>
        <begin position="371"/>
        <end position="391"/>
    </location>
</feature>
<feature type="transmembrane region" description="Helical" evidence="1">
    <location>
        <begin position="402"/>
        <end position="422"/>
    </location>
</feature>
<feature type="transmembrane region" description="Helical" evidence="1">
    <location>
        <begin position="428"/>
        <end position="448"/>
    </location>
</feature>
<feature type="transmembrane region" description="Helical" evidence="1">
    <location>
        <begin position="471"/>
        <end position="491"/>
    </location>
</feature>
<feature type="transmembrane region" description="Helical" evidence="1">
    <location>
        <begin position="494"/>
        <end position="514"/>
    </location>
</feature>
<feature type="region of interest" description="Disordered" evidence="2">
    <location>
        <begin position="281"/>
        <end position="313"/>
    </location>
</feature>
<feature type="compositionally biased region" description="Acidic residues" evidence="2">
    <location>
        <begin position="285"/>
        <end position="303"/>
    </location>
</feature>
<protein>
    <recommendedName>
        <fullName>Putative glycerol-3-phosphate transporter 4</fullName>
        <shortName>G-3-P transporter 4</shortName>
    </recommendedName>
    <alternativeName>
        <fullName>Glycerol-3-phosphate permease 4</fullName>
        <shortName>AtG3Pp4</shortName>
        <shortName>G-3-P permease 4</shortName>
    </alternativeName>
</protein>
<proteinExistence type="inferred from homology"/>
<comment type="subcellular location">
    <subcellularLocation>
        <location evidence="3">Membrane</location>
        <topology evidence="3">Multi-pass membrane protein</topology>
    </subcellularLocation>
</comment>
<comment type="similarity">
    <text evidence="3">Belongs to the major facilitator superfamily. Organophosphate:Pi antiporter (OPA) (TC 2.A.1.4) family.</text>
</comment>
<comment type="sequence caution" evidence="3">
    <conflict type="erroneous gene model prediction">
        <sequence resource="EMBL-CDS" id="CAB10535"/>
    </conflict>
</comment>
<comment type="sequence caution" evidence="3">
    <conflict type="erroneous gene model prediction">
        <sequence resource="EMBL-CDS" id="CAB78758"/>
    </conflict>
</comment>
<evidence type="ECO:0000255" key="1"/>
<evidence type="ECO:0000256" key="2">
    <source>
        <dbReference type="SAM" id="MobiDB-lite"/>
    </source>
</evidence>
<evidence type="ECO:0000305" key="3"/>
<organism>
    <name type="scientific">Arabidopsis thaliana</name>
    <name type="common">Mouse-ear cress</name>
    <dbReference type="NCBI Taxonomy" id="3702"/>
    <lineage>
        <taxon>Eukaryota</taxon>
        <taxon>Viridiplantae</taxon>
        <taxon>Streptophyta</taxon>
        <taxon>Embryophyta</taxon>
        <taxon>Tracheophyta</taxon>
        <taxon>Spermatophyta</taxon>
        <taxon>Magnoliopsida</taxon>
        <taxon>eudicotyledons</taxon>
        <taxon>Gunneridae</taxon>
        <taxon>Pentapetalae</taxon>
        <taxon>rosids</taxon>
        <taxon>malvids</taxon>
        <taxon>Brassicales</taxon>
        <taxon>Brassicaceae</taxon>
        <taxon>Camelineae</taxon>
        <taxon>Arabidopsis</taxon>
    </lineage>
</organism>